<accession>Q3ZC67</accession>
<sequence>MKDPSRSSTSPSIINEDVIINGHSHEDDNPFAEYMWMENEEEFNRQIEEELWEEEFIERCFQEMLEEEEEHEWFIPARDLPQTMDQIQDQFNDLVISDGSSLEDLVVKSNLNPNAKEFVPGVKY</sequence>
<comment type="function">
    <text evidence="1">Acts as a repressor in the regulation of translation initiation of poly(A)-containing mRNAs. Its inhibitory activity on translation is mediated via its action on PABPC1. Displaces the interaction of PABPC1 with poly(A) RNA and competes with PAIP1 for binding to PABPC1. Its association with PABPC1 results in disruption of the cytoplasmic poly(A) RNP structure organization (By similarity).</text>
</comment>
<comment type="subunit">
    <text evidence="1">Interacts with the second and third RRM domains and C-terminus regions of PABPC1 in a 2:1 stoichiometry.</text>
</comment>
<comment type="subcellular location">
    <subcellularLocation>
        <location evidence="1">Cytoplasm</location>
    </subcellularLocation>
</comment>
<comment type="domain">
    <text evidence="1">Only the PABPC1-interacting motif-1 (PAM1) interferes with the binding of PABPC1 to poly(A) RNA and translation initiation.</text>
</comment>
<comment type="PTM">
    <text evidence="2">Ubiquitinated, leading to its degradation by the proteasome.</text>
</comment>
<comment type="similarity">
    <text evidence="3">Belongs to the PAIP2 family.</text>
</comment>
<proteinExistence type="evidence at transcript level"/>
<gene>
    <name type="primary">PAIP2</name>
</gene>
<protein>
    <recommendedName>
        <fullName>Polyadenylate-binding protein-interacting protein 2</fullName>
        <shortName>PABP-interacting protein 2</shortName>
        <shortName>PAIP-2</shortName>
        <shortName>Poly(A)-binding protein-interacting protein 2</shortName>
    </recommendedName>
</protein>
<organism>
    <name type="scientific">Bos taurus</name>
    <name type="common">Bovine</name>
    <dbReference type="NCBI Taxonomy" id="9913"/>
    <lineage>
        <taxon>Eukaryota</taxon>
        <taxon>Metazoa</taxon>
        <taxon>Chordata</taxon>
        <taxon>Craniata</taxon>
        <taxon>Vertebrata</taxon>
        <taxon>Euteleostomi</taxon>
        <taxon>Mammalia</taxon>
        <taxon>Eutheria</taxon>
        <taxon>Laurasiatheria</taxon>
        <taxon>Artiodactyla</taxon>
        <taxon>Ruminantia</taxon>
        <taxon>Pecora</taxon>
        <taxon>Bovidae</taxon>
        <taxon>Bovinae</taxon>
        <taxon>Bos</taxon>
    </lineage>
</organism>
<keyword id="KW-0963">Cytoplasm</keyword>
<keyword id="KW-1185">Reference proteome</keyword>
<keyword id="KW-0810">Translation regulation</keyword>
<keyword id="KW-0832">Ubl conjugation</keyword>
<dbReference type="EMBL" id="BC102885">
    <property type="protein sequence ID" value="AAI02886.1"/>
    <property type="molecule type" value="mRNA"/>
</dbReference>
<dbReference type="RefSeq" id="NP_001029808.1">
    <property type="nucleotide sequence ID" value="NM_001034636.2"/>
</dbReference>
<dbReference type="RefSeq" id="XP_024850169.1">
    <property type="nucleotide sequence ID" value="XM_024994401.1"/>
</dbReference>
<dbReference type="BMRB" id="Q3ZC67"/>
<dbReference type="FunCoup" id="Q3ZC67">
    <property type="interactions" value="1997"/>
</dbReference>
<dbReference type="STRING" id="9913.ENSBTAP00000010815"/>
<dbReference type="PaxDb" id="9913-ENSBTAP00000010815"/>
<dbReference type="Ensembl" id="ENSBTAT00000010815.3">
    <property type="protein sequence ID" value="ENSBTAP00000010815.2"/>
    <property type="gene ID" value="ENSBTAG00000008224.3"/>
</dbReference>
<dbReference type="GeneID" id="536619"/>
<dbReference type="KEGG" id="bta:536619"/>
<dbReference type="CTD" id="51247"/>
<dbReference type="VEuPathDB" id="HostDB:ENSBTAG00000008224"/>
<dbReference type="VGNC" id="VGNC:53573">
    <property type="gene designation" value="PAIP2"/>
</dbReference>
<dbReference type="eggNOG" id="ENOG502RZKX">
    <property type="taxonomic scope" value="Eukaryota"/>
</dbReference>
<dbReference type="GeneTree" id="ENSGT00390000017284"/>
<dbReference type="HOGENOM" id="CLU_134152_0_0_1"/>
<dbReference type="InParanoid" id="Q3ZC67"/>
<dbReference type="OMA" id="PGIQKHN"/>
<dbReference type="OrthoDB" id="5985142at2759"/>
<dbReference type="TreeFam" id="TF326855"/>
<dbReference type="Proteomes" id="UP000009136">
    <property type="component" value="Chromosome 7"/>
</dbReference>
<dbReference type="Bgee" id="ENSBTAG00000008224">
    <property type="expression patterns" value="Expressed in adenohypophysis and 104 other cell types or tissues"/>
</dbReference>
<dbReference type="GO" id="GO:0005737">
    <property type="term" value="C:cytoplasm"/>
    <property type="evidence" value="ECO:0000318"/>
    <property type="project" value="GO_Central"/>
</dbReference>
<dbReference type="GO" id="GO:0003729">
    <property type="term" value="F:mRNA binding"/>
    <property type="evidence" value="ECO:0007669"/>
    <property type="project" value="Ensembl"/>
</dbReference>
<dbReference type="GO" id="GO:0000900">
    <property type="term" value="F:mRNA regulatory element binding translation repressor activity"/>
    <property type="evidence" value="ECO:0007669"/>
    <property type="project" value="InterPro"/>
</dbReference>
<dbReference type="GO" id="GO:0030371">
    <property type="term" value="F:translation repressor activity"/>
    <property type="evidence" value="ECO:0000318"/>
    <property type="project" value="GO_Central"/>
</dbReference>
<dbReference type="GO" id="GO:0007613">
    <property type="term" value="P:memory"/>
    <property type="evidence" value="ECO:0007669"/>
    <property type="project" value="Ensembl"/>
</dbReference>
<dbReference type="GO" id="GO:0017148">
    <property type="term" value="P:negative regulation of translation"/>
    <property type="evidence" value="ECO:0000318"/>
    <property type="project" value="GO_Central"/>
</dbReference>
<dbReference type="GO" id="GO:0045947">
    <property type="term" value="P:negative regulation of translational initiation"/>
    <property type="evidence" value="ECO:0007669"/>
    <property type="project" value="Ensembl"/>
</dbReference>
<dbReference type="GO" id="GO:1900271">
    <property type="term" value="P:regulation of long-term synaptic potentiation"/>
    <property type="evidence" value="ECO:0007669"/>
    <property type="project" value="Ensembl"/>
</dbReference>
<dbReference type="GO" id="GO:0007283">
    <property type="term" value="P:spermatogenesis"/>
    <property type="evidence" value="ECO:0007669"/>
    <property type="project" value="Ensembl"/>
</dbReference>
<dbReference type="GO" id="GO:0006412">
    <property type="term" value="P:translation"/>
    <property type="evidence" value="ECO:0007669"/>
    <property type="project" value="Ensembl"/>
</dbReference>
<dbReference type="InterPro" id="IPR040396">
    <property type="entry name" value="PAIP2-like"/>
</dbReference>
<dbReference type="InterPro" id="IPR009818">
    <property type="entry name" value="PAM2_motif"/>
</dbReference>
<dbReference type="PANTHER" id="PTHR13154">
    <property type="entry name" value="POLYADENYLATE-BINDING PROTEIN-INTERACTING PROTEIN 2"/>
    <property type="match status" value="1"/>
</dbReference>
<dbReference type="PANTHER" id="PTHR13154:SF2">
    <property type="entry name" value="POLYADENYLATE-BINDING PROTEIN-INTERACTING PROTEIN 2"/>
    <property type="match status" value="1"/>
</dbReference>
<dbReference type="Pfam" id="PF07145">
    <property type="entry name" value="PAM2"/>
    <property type="match status" value="1"/>
</dbReference>
<name>PAIP2_BOVIN</name>
<evidence type="ECO:0000250" key="1"/>
<evidence type="ECO:0000250" key="2">
    <source>
        <dbReference type="UniProtKB" id="Q9BPZ3"/>
    </source>
</evidence>
<evidence type="ECO:0000305" key="3"/>
<feature type="chain" id="PRO_0000252686" description="Polyadenylate-binding protein-interacting protein 2">
    <location>
        <begin position="1"/>
        <end position="124"/>
    </location>
</feature>
<feature type="region of interest" description="PABPC1-interacting motif-1 (PAM1)" evidence="1">
    <location>
        <begin position="22"/>
        <end position="75"/>
    </location>
</feature>
<feature type="region of interest" description="PABPC1-interacting motif-2 (PAM2)" evidence="1">
    <location>
        <begin position="105"/>
        <end position="120"/>
    </location>
</feature>
<reference key="1">
    <citation type="submission" date="2005-08" db="EMBL/GenBank/DDBJ databases">
        <authorList>
            <consortium name="NIH - Mammalian Gene Collection (MGC) project"/>
        </authorList>
    </citation>
    <scope>NUCLEOTIDE SEQUENCE [LARGE SCALE MRNA]</scope>
    <source>
        <strain>Crossbred X Angus</strain>
        <tissue>Ileum</tissue>
    </source>
</reference>